<keyword id="KW-1015">Disulfide bond</keyword>
<keyword id="KW-0256">Endoplasmic reticulum</keyword>
<keyword id="KW-0472">Membrane</keyword>
<keyword id="KW-0496">Mitochondrion</keyword>
<keyword id="KW-1185">Reference proteome</keyword>
<keyword id="KW-0732">Signal</keyword>
<keyword id="KW-0812">Transmembrane</keyword>
<keyword id="KW-1133">Transmembrane helix</keyword>
<comment type="function">
    <text evidence="1">Endoplasmic reticulum and mitochondria-associated protein that probably functions as a regulator of cellular redox state and thereby regulates protein post-translational modification, protein folding and mitochondrial activity.</text>
</comment>
<comment type="subunit">
    <text evidence="1">Monomer. Homodimer; disulfide-linked. Occurs in both reduced and oxidized monomeric form. Oxidative conditions increase homodimerization.</text>
</comment>
<comment type="subcellular location">
    <subcellularLocation>
        <location evidence="1">Endoplasmic reticulum membrane</location>
        <topology evidence="2">Single-pass type I membrane protein</topology>
    </subcellularLocation>
    <subcellularLocation>
        <location evidence="1">Mitochondrion membrane</location>
        <topology evidence="2">Single-pass type I membrane protein</topology>
    </subcellularLocation>
    <text evidence="1">Localizes to endoplasmic reticulum mitochondria-associated membrane (MAMs) that connect the endoplasmic reticulum and the mitochondria.</text>
</comment>
<comment type="domain">
    <text evidence="5">The thioredoxin domain lacks the 2 redox-active cysteines, suggesting that it lacks thioredoxin activity.</text>
</comment>
<comment type="domain">
    <text evidence="5">The di-lysine motif confers endoplasmic reticulum localization for type I membrane proteins.</text>
</comment>
<name>TMX2A_DANRE</name>
<evidence type="ECO:0000250" key="1">
    <source>
        <dbReference type="UniProtKB" id="Q9Y320"/>
    </source>
</evidence>
<evidence type="ECO:0000255" key="2"/>
<evidence type="ECO:0000255" key="3">
    <source>
        <dbReference type="PROSITE-ProRule" id="PRU00691"/>
    </source>
</evidence>
<evidence type="ECO:0000256" key="4">
    <source>
        <dbReference type="SAM" id="MobiDB-lite"/>
    </source>
</evidence>
<evidence type="ECO:0000305" key="5"/>
<evidence type="ECO:0000312" key="6">
    <source>
        <dbReference type="EMBL" id="AAI54621.1"/>
    </source>
</evidence>
<evidence type="ECO:0000312" key="7">
    <source>
        <dbReference type="ZFIN" id="ZDB-GENE-050208-95"/>
    </source>
</evidence>
<dbReference type="EMBL" id="BC154620">
    <property type="protein sequence ID" value="AAI54621.1"/>
    <property type="molecule type" value="mRNA"/>
</dbReference>
<dbReference type="RefSeq" id="NP_001103857.1">
    <property type="nucleotide sequence ID" value="NM_001110387.1"/>
</dbReference>
<dbReference type="SMR" id="A8WG88"/>
<dbReference type="FunCoup" id="A8WG88">
    <property type="interactions" value="390"/>
</dbReference>
<dbReference type="STRING" id="7955.ENSDARP00000098029"/>
<dbReference type="PaxDb" id="7955-ENSDARP00000098029"/>
<dbReference type="GeneID" id="561718"/>
<dbReference type="KEGG" id="dre:561718"/>
<dbReference type="AGR" id="ZFIN:ZDB-GENE-050208-95"/>
<dbReference type="CTD" id="561718"/>
<dbReference type="ZFIN" id="ZDB-GENE-050208-95">
    <property type="gene designation" value="tmx2a"/>
</dbReference>
<dbReference type="eggNOG" id="KOG0914">
    <property type="taxonomic scope" value="Eukaryota"/>
</dbReference>
<dbReference type="HOGENOM" id="CLU_064868_0_0_1"/>
<dbReference type="InParanoid" id="A8WG88"/>
<dbReference type="OrthoDB" id="20229at2759"/>
<dbReference type="PhylomeDB" id="A8WG88"/>
<dbReference type="TreeFam" id="TF314606"/>
<dbReference type="PRO" id="PR:A8WG88"/>
<dbReference type="Proteomes" id="UP000000437">
    <property type="component" value="Alternate scaffold 14"/>
</dbReference>
<dbReference type="Proteomes" id="UP000000437">
    <property type="component" value="Chromosome 14"/>
</dbReference>
<dbReference type="GO" id="GO:0005789">
    <property type="term" value="C:endoplasmic reticulum membrane"/>
    <property type="evidence" value="ECO:0000318"/>
    <property type="project" value="GO_Central"/>
</dbReference>
<dbReference type="GO" id="GO:0044233">
    <property type="term" value="C:mitochondria-associated endoplasmic reticulum membrane contact site"/>
    <property type="evidence" value="ECO:0000250"/>
    <property type="project" value="UniProtKB"/>
</dbReference>
<dbReference type="GO" id="GO:0031966">
    <property type="term" value="C:mitochondrial membrane"/>
    <property type="evidence" value="ECO:0007669"/>
    <property type="project" value="UniProtKB-SubCell"/>
</dbReference>
<dbReference type="GO" id="GO:0005739">
    <property type="term" value="C:mitochondrion"/>
    <property type="evidence" value="ECO:0000318"/>
    <property type="project" value="GO_Central"/>
</dbReference>
<dbReference type="GO" id="GO:0015036">
    <property type="term" value="F:disulfide oxidoreductase activity"/>
    <property type="evidence" value="ECO:0000318"/>
    <property type="project" value="GO_Central"/>
</dbReference>
<dbReference type="GO" id="GO:0007420">
    <property type="term" value="P:brain development"/>
    <property type="evidence" value="ECO:0000318"/>
    <property type="project" value="GO_Central"/>
</dbReference>
<dbReference type="CDD" id="cd02962">
    <property type="entry name" value="TMX2"/>
    <property type="match status" value="1"/>
</dbReference>
<dbReference type="Gene3D" id="3.40.30.10">
    <property type="entry name" value="Glutaredoxin"/>
    <property type="match status" value="1"/>
</dbReference>
<dbReference type="InterPro" id="IPR036249">
    <property type="entry name" value="Thioredoxin-like_sf"/>
</dbReference>
<dbReference type="InterPro" id="IPR013766">
    <property type="entry name" value="Thioredoxin_domain"/>
</dbReference>
<dbReference type="InterPro" id="IPR039101">
    <property type="entry name" value="TMX2"/>
</dbReference>
<dbReference type="InterPro" id="IPR037463">
    <property type="entry name" value="TMX2_thioredoxin_dom"/>
</dbReference>
<dbReference type="PANTHER" id="PTHR15853">
    <property type="entry name" value="THIOREDOXIN-RELATED"/>
    <property type="match status" value="1"/>
</dbReference>
<dbReference type="PANTHER" id="PTHR15853:SF0">
    <property type="entry name" value="THIOREDOXIN-RELATED TRANSMEMBRANE PROTEIN 2"/>
    <property type="match status" value="1"/>
</dbReference>
<dbReference type="Pfam" id="PF00085">
    <property type="entry name" value="Thioredoxin"/>
    <property type="match status" value="1"/>
</dbReference>
<dbReference type="SUPFAM" id="SSF52833">
    <property type="entry name" value="Thioredoxin-like"/>
    <property type="match status" value="1"/>
</dbReference>
<dbReference type="PROSITE" id="PS51352">
    <property type="entry name" value="THIOREDOXIN_2"/>
    <property type="match status" value="1"/>
</dbReference>
<organism>
    <name type="scientific">Danio rerio</name>
    <name type="common">Zebrafish</name>
    <name type="synonym">Brachydanio rerio</name>
    <dbReference type="NCBI Taxonomy" id="7955"/>
    <lineage>
        <taxon>Eukaryota</taxon>
        <taxon>Metazoa</taxon>
        <taxon>Chordata</taxon>
        <taxon>Craniata</taxon>
        <taxon>Vertebrata</taxon>
        <taxon>Euteleostomi</taxon>
        <taxon>Actinopterygii</taxon>
        <taxon>Neopterygii</taxon>
        <taxon>Teleostei</taxon>
        <taxon>Ostariophysi</taxon>
        <taxon>Cypriniformes</taxon>
        <taxon>Danionidae</taxon>
        <taxon>Danioninae</taxon>
        <taxon>Danio</taxon>
    </lineage>
</organism>
<sequence>MSLIRGLISTIYYLPKIYKWFYRPYYFLSLLMTLAFVIVRCCPGLCEHLPSQREDGDSCAFDWREVEIFMFLGAIVMMKNRRAVTVEQHIGNIFLFSKVANVVLFFRVDLRFGLLYLTLCVVFLITCKPPAYMGPENIKYFRDSTIDEELQRDSRVTWIVEFYANWSPECQSFAPIFADLSLKYTCLGLKFGKVDIGHYGAVAERYKVNPSPLCKQLPSLLMLQAGRELMRRPLVDKKGRAVSWNFTEDNIIRDFNLNEIFQKYKKFSKGEKPEEPQPVLEEESESPLEEEEEDSESKKDK</sequence>
<accession>A8WG88</accession>
<feature type="signal peptide" evidence="2">
    <location>
        <begin position="1"/>
        <end position="19"/>
    </location>
</feature>
<feature type="chain" id="PRO_0000401126" description="Thioredoxin-related transmembrane protein 2-A">
    <location>
        <begin position="20"/>
        <end position="301"/>
    </location>
</feature>
<feature type="topological domain" description="Extracellular" evidence="2">
    <location>
        <begin position="20"/>
        <end position="111"/>
    </location>
</feature>
<feature type="transmembrane region" description="Helical" evidence="2">
    <location>
        <begin position="112"/>
        <end position="132"/>
    </location>
</feature>
<feature type="topological domain" description="Cytoplasmic" evidence="2">
    <location>
        <begin position="133"/>
        <end position="301"/>
    </location>
</feature>
<feature type="domain" description="Thioredoxin" evidence="3">
    <location>
        <begin position="122"/>
        <end position="269"/>
    </location>
</feature>
<feature type="region of interest" description="Disordered" evidence="4">
    <location>
        <begin position="268"/>
        <end position="301"/>
    </location>
</feature>
<feature type="short sequence motif" description="Di-lysine motif" evidence="5">
    <location>
        <begin position="298"/>
        <end position="301"/>
    </location>
</feature>
<feature type="compositionally biased region" description="Acidic residues" evidence="4">
    <location>
        <begin position="280"/>
        <end position="295"/>
    </location>
</feature>
<gene>
    <name evidence="7" type="primary">tmx2a</name>
    <name type="ORF">zgc:172264</name>
</gene>
<reference evidence="6" key="1">
    <citation type="submission" date="2007-11" db="EMBL/GenBank/DDBJ databases">
        <authorList>
            <consortium name="NIH - Zebrafish Gene Collection (ZGC) project"/>
        </authorList>
    </citation>
    <scope>NUCLEOTIDE SEQUENCE [LARGE SCALE MRNA]</scope>
    <source>
        <strain evidence="6">WIK</strain>
    </source>
</reference>
<proteinExistence type="evidence at transcript level"/>
<protein>
    <recommendedName>
        <fullName evidence="7">Thioredoxin-related transmembrane protein 2-A</fullName>
    </recommendedName>
</protein>